<protein>
    <recommendedName>
        <fullName evidence="1">Adenylate kinase</fullName>
        <shortName evidence="1">AK</shortName>
        <ecNumber evidence="1">2.7.4.3</ecNumber>
    </recommendedName>
    <alternativeName>
        <fullName evidence="1">ATP-AMP transphosphorylase</fullName>
    </alternativeName>
    <alternativeName>
        <fullName evidence="1">ATP:AMP phosphotransferase</fullName>
    </alternativeName>
    <alternativeName>
        <fullName evidence="1">Adenylate monophosphate kinase</fullName>
    </alternativeName>
</protein>
<gene>
    <name evidence="1" type="primary">adk</name>
    <name type="ordered locus">LPC_0827</name>
</gene>
<feature type="chain" id="PRO_1000058847" description="Adenylate kinase">
    <location>
        <begin position="1"/>
        <end position="218"/>
    </location>
</feature>
<feature type="region of interest" description="NMP" evidence="1">
    <location>
        <begin position="30"/>
        <end position="59"/>
    </location>
</feature>
<feature type="region of interest" description="LID" evidence="1">
    <location>
        <begin position="122"/>
        <end position="159"/>
    </location>
</feature>
<feature type="binding site" evidence="1">
    <location>
        <begin position="10"/>
        <end position="15"/>
    </location>
    <ligand>
        <name>ATP</name>
        <dbReference type="ChEBI" id="CHEBI:30616"/>
    </ligand>
</feature>
<feature type="binding site" evidence="1">
    <location>
        <position position="31"/>
    </location>
    <ligand>
        <name>AMP</name>
        <dbReference type="ChEBI" id="CHEBI:456215"/>
    </ligand>
</feature>
<feature type="binding site" evidence="1">
    <location>
        <position position="36"/>
    </location>
    <ligand>
        <name>AMP</name>
        <dbReference type="ChEBI" id="CHEBI:456215"/>
    </ligand>
</feature>
<feature type="binding site" evidence="1">
    <location>
        <begin position="57"/>
        <end position="59"/>
    </location>
    <ligand>
        <name>AMP</name>
        <dbReference type="ChEBI" id="CHEBI:456215"/>
    </ligand>
</feature>
<feature type="binding site" evidence="1">
    <location>
        <begin position="85"/>
        <end position="88"/>
    </location>
    <ligand>
        <name>AMP</name>
        <dbReference type="ChEBI" id="CHEBI:456215"/>
    </ligand>
</feature>
<feature type="binding site" evidence="1">
    <location>
        <position position="92"/>
    </location>
    <ligand>
        <name>AMP</name>
        <dbReference type="ChEBI" id="CHEBI:456215"/>
    </ligand>
</feature>
<feature type="binding site" evidence="1">
    <location>
        <position position="123"/>
    </location>
    <ligand>
        <name>ATP</name>
        <dbReference type="ChEBI" id="CHEBI:30616"/>
    </ligand>
</feature>
<feature type="binding site" evidence="1">
    <location>
        <begin position="132"/>
        <end position="133"/>
    </location>
    <ligand>
        <name>ATP</name>
        <dbReference type="ChEBI" id="CHEBI:30616"/>
    </ligand>
</feature>
<feature type="binding site" evidence="1">
    <location>
        <position position="156"/>
    </location>
    <ligand>
        <name>AMP</name>
        <dbReference type="ChEBI" id="CHEBI:456215"/>
    </ligand>
</feature>
<feature type="binding site" evidence="1">
    <location>
        <position position="167"/>
    </location>
    <ligand>
        <name>AMP</name>
        <dbReference type="ChEBI" id="CHEBI:456215"/>
    </ligand>
</feature>
<feature type="binding site" evidence="1">
    <location>
        <position position="203"/>
    </location>
    <ligand>
        <name>ATP</name>
        <dbReference type="ChEBI" id="CHEBI:30616"/>
    </ligand>
</feature>
<keyword id="KW-0067">ATP-binding</keyword>
<keyword id="KW-0963">Cytoplasm</keyword>
<keyword id="KW-0418">Kinase</keyword>
<keyword id="KW-0545">Nucleotide biosynthesis</keyword>
<keyword id="KW-0547">Nucleotide-binding</keyword>
<keyword id="KW-0808">Transferase</keyword>
<name>KAD_LEGPC</name>
<proteinExistence type="inferred from homology"/>
<sequence length="218" mass="24121">MRLMLLGGPGAGKGTQASLLINRYKIPQISTGDMLRAAIAKGTPLGLSAQKIMESGGLVSDDIIIGLVKERLKNPDCDRGFLFDGFPRTLVQAEALKDAEIHLDHVIEIAVDDEEIIERISGRRIHQPSGRVYHVVNQPPKNPGVDDITGEPLIQRDDDKEETIRKRLQVYHSQTAPLVQYYKEWAESGSKEAPKFHTISGTGTVEQIFDNIVTILET</sequence>
<comment type="function">
    <text evidence="1">Catalyzes the reversible transfer of the terminal phosphate group between ATP and AMP. Plays an important role in cellular energy homeostasis and in adenine nucleotide metabolism.</text>
</comment>
<comment type="catalytic activity">
    <reaction evidence="1">
        <text>AMP + ATP = 2 ADP</text>
        <dbReference type="Rhea" id="RHEA:12973"/>
        <dbReference type="ChEBI" id="CHEBI:30616"/>
        <dbReference type="ChEBI" id="CHEBI:456215"/>
        <dbReference type="ChEBI" id="CHEBI:456216"/>
        <dbReference type="EC" id="2.7.4.3"/>
    </reaction>
</comment>
<comment type="pathway">
    <text evidence="1">Purine metabolism; AMP biosynthesis via salvage pathway; AMP from ADP: step 1/1.</text>
</comment>
<comment type="subunit">
    <text evidence="1">Monomer.</text>
</comment>
<comment type="subcellular location">
    <subcellularLocation>
        <location evidence="1">Cytoplasm</location>
    </subcellularLocation>
</comment>
<comment type="domain">
    <text evidence="1">Consists of three domains, a large central CORE domain and two small peripheral domains, NMPbind and LID, which undergo movements during catalysis. The LID domain closes over the site of phosphoryl transfer upon ATP binding. Assembling and dissambling the active center during each catalytic cycle provides an effective means to prevent ATP hydrolysis.</text>
</comment>
<comment type="similarity">
    <text evidence="1">Belongs to the adenylate kinase family.</text>
</comment>
<accession>A5IBQ3</accession>
<evidence type="ECO:0000255" key="1">
    <source>
        <dbReference type="HAMAP-Rule" id="MF_00235"/>
    </source>
</evidence>
<dbReference type="EC" id="2.7.4.3" evidence="1"/>
<dbReference type="EMBL" id="CP000675">
    <property type="protein sequence ID" value="ABQ54803.1"/>
    <property type="molecule type" value="Genomic_DNA"/>
</dbReference>
<dbReference type="RefSeq" id="WP_011946427.1">
    <property type="nucleotide sequence ID" value="NZ_JAPMSS010000002.1"/>
</dbReference>
<dbReference type="SMR" id="A5IBQ3"/>
<dbReference type="GeneID" id="57035401"/>
<dbReference type="KEGG" id="lpc:LPC_0827"/>
<dbReference type="HOGENOM" id="CLU_032354_1_2_6"/>
<dbReference type="UniPathway" id="UPA00588">
    <property type="reaction ID" value="UER00649"/>
</dbReference>
<dbReference type="GO" id="GO:0005737">
    <property type="term" value="C:cytoplasm"/>
    <property type="evidence" value="ECO:0007669"/>
    <property type="project" value="UniProtKB-SubCell"/>
</dbReference>
<dbReference type="GO" id="GO:0004017">
    <property type="term" value="F:adenylate kinase activity"/>
    <property type="evidence" value="ECO:0007669"/>
    <property type="project" value="UniProtKB-UniRule"/>
</dbReference>
<dbReference type="GO" id="GO:0005524">
    <property type="term" value="F:ATP binding"/>
    <property type="evidence" value="ECO:0007669"/>
    <property type="project" value="UniProtKB-UniRule"/>
</dbReference>
<dbReference type="GO" id="GO:0044209">
    <property type="term" value="P:AMP salvage"/>
    <property type="evidence" value="ECO:0007669"/>
    <property type="project" value="UniProtKB-UniRule"/>
</dbReference>
<dbReference type="CDD" id="cd01428">
    <property type="entry name" value="ADK"/>
    <property type="match status" value="1"/>
</dbReference>
<dbReference type="FunFam" id="3.40.50.300:FF:000106">
    <property type="entry name" value="Adenylate kinase mitochondrial"/>
    <property type="match status" value="1"/>
</dbReference>
<dbReference type="Gene3D" id="3.40.50.300">
    <property type="entry name" value="P-loop containing nucleotide triphosphate hydrolases"/>
    <property type="match status" value="1"/>
</dbReference>
<dbReference type="HAMAP" id="MF_00235">
    <property type="entry name" value="Adenylate_kinase_Adk"/>
    <property type="match status" value="1"/>
</dbReference>
<dbReference type="InterPro" id="IPR006259">
    <property type="entry name" value="Adenyl_kin_sub"/>
</dbReference>
<dbReference type="InterPro" id="IPR000850">
    <property type="entry name" value="Adenylat/UMP-CMP_kin"/>
</dbReference>
<dbReference type="InterPro" id="IPR033690">
    <property type="entry name" value="Adenylat_kinase_CS"/>
</dbReference>
<dbReference type="InterPro" id="IPR007862">
    <property type="entry name" value="Adenylate_kinase_lid-dom"/>
</dbReference>
<dbReference type="InterPro" id="IPR027417">
    <property type="entry name" value="P-loop_NTPase"/>
</dbReference>
<dbReference type="NCBIfam" id="TIGR01351">
    <property type="entry name" value="adk"/>
    <property type="match status" value="1"/>
</dbReference>
<dbReference type="NCBIfam" id="NF001379">
    <property type="entry name" value="PRK00279.1-1"/>
    <property type="match status" value="1"/>
</dbReference>
<dbReference type="NCBIfam" id="NF001380">
    <property type="entry name" value="PRK00279.1-2"/>
    <property type="match status" value="1"/>
</dbReference>
<dbReference type="NCBIfam" id="NF001381">
    <property type="entry name" value="PRK00279.1-3"/>
    <property type="match status" value="1"/>
</dbReference>
<dbReference type="NCBIfam" id="NF011100">
    <property type="entry name" value="PRK14527.1"/>
    <property type="match status" value="1"/>
</dbReference>
<dbReference type="PANTHER" id="PTHR23359">
    <property type="entry name" value="NUCLEOTIDE KINASE"/>
    <property type="match status" value="1"/>
</dbReference>
<dbReference type="Pfam" id="PF00406">
    <property type="entry name" value="ADK"/>
    <property type="match status" value="1"/>
</dbReference>
<dbReference type="Pfam" id="PF05191">
    <property type="entry name" value="ADK_lid"/>
    <property type="match status" value="1"/>
</dbReference>
<dbReference type="PRINTS" id="PR00094">
    <property type="entry name" value="ADENYLTKNASE"/>
</dbReference>
<dbReference type="SUPFAM" id="SSF52540">
    <property type="entry name" value="P-loop containing nucleoside triphosphate hydrolases"/>
    <property type="match status" value="1"/>
</dbReference>
<dbReference type="PROSITE" id="PS00113">
    <property type="entry name" value="ADENYLATE_KINASE"/>
    <property type="match status" value="1"/>
</dbReference>
<reference key="1">
    <citation type="submission" date="2006-11" db="EMBL/GenBank/DDBJ databases">
        <title>Identification and characterization of a new conjugation/ type IVA secretion system (trb/tra) of L. pneumophila Corby localized on a mobile genomic island.</title>
        <authorList>
            <person name="Gloeckner G."/>
            <person name="Albert-Weissenberger C."/>
            <person name="Weinmann E."/>
            <person name="Jacobi S."/>
            <person name="Schunder E."/>
            <person name="Steinert M."/>
            <person name="Buchrieser C."/>
            <person name="Hacker J."/>
            <person name="Heuner K."/>
        </authorList>
    </citation>
    <scope>NUCLEOTIDE SEQUENCE [LARGE SCALE GENOMIC DNA]</scope>
    <source>
        <strain>Corby</strain>
    </source>
</reference>
<organism>
    <name type="scientific">Legionella pneumophila (strain Corby)</name>
    <dbReference type="NCBI Taxonomy" id="400673"/>
    <lineage>
        <taxon>Bacteria</taxon>
        <taxon>Pseudomonadati</taxon>
        <taxon>Pseudomonadota</taxon>
        <taxon>Gammaproteobacteria</taxon>
        <taxon>Legionellales</taxon>
        <taxon>Legionellaceae</taxon>
        <taxon>Legionella</taxon>
    </lineage>
</organism>